<sequence>MGLLFTPKHQKLVNQCYPTGRTPDKKPKSSETSYLLYYVNSRRTKLEKVSAYLVKRTAADLAHRRIGNVMVTLELAEKIVTSCKENLNVFVKEFLDIMIKTLSNNNFNLDVCVVEAAEAVFSSICQHLDGVLCNSDLEFTQMYRSFVDVYCQVVTERLHNDELLMKGCLDISKTANLAGNPGVSSLISRGVELTLAKFQEVQPRFQGESLQVDLHSSEKRLSRSQTHLTAAEESRVLGGYPEQALQSYFSTTETDKLSIAIRALIKRLLEVPNKELLQYIANTIPVQLRYILVLVFTHALNQEDEHAVVLLKLMTTLLVSDVSIIGLSVLDLLRKIINFQLASATSPQVTEACTNTISALNRKTYYKDQPIDMISELLLKLKEHPGQREKDILISDLQAVLQTVGQPFMTLELFLELAPYVPDRLELFSLVTDKLPGGFVMNKFFLFLVALESPGEQEKLLDDAFAKYKNFTLLSGLIYFLEEGNTPSNLYYCYHTKAARFLEFDDYHSQAQYKRQEREIFTRNDLVNYYSDPGCNRYAEKGLRILISQNTRVSTTDLTETPPEGELQIPDIPLPPTPPTPQQHRMFLNSDASVKSLDKMKSPKVSDLKRAARGIRVAPSHSSLRASQSVKSRVTNITFLLNELNNESQETGIYDPEEEEVVGLEKTDLARSISAKVSPAIAYSSKRFGNLTSSLDLELQEDAFQDASGEIEASSAFRGKLFSS</sequence>
<protein>
    <recommendedName>
        <fullName>Protein EFR3</fullName>
    </recommendedName>
</protein>
<organism>
    <name type="scientific">Eremothecium gossypii (strain ATCC 10895 / CBS 109.51 / FGSC 9923 / NRRL Y-1056)</name>
    <name type="common">Yeast</name>
    <name type="synonym">Ashbya gossypii</name>
    <dbReference type="NCBI Taxonomy" id="284811"/>
    <lineage>
        <taxon>Eukaryota</taxon>
        <taxon>Fungi</taxon>
        <taxon>Dikarya</taxon>
        <taxon>Ascomycota</taxon>
        <taxon>Saccharomycotina</taxon>
        <taxon>Saccharomycetes</taxon>
        <taxon>Saccharomycetales</taxon>
        <taxon>Saccharomycetaceae</taxon>
        <taxon>Eremothecium</taxon>
    </lineage>
</organism>
<name>EFR3_EREGS</name>
<keyword id="KW-1185">Reference proteome</keyword>
<evidence type="ECO:0000305" key="1"/>
<feature type="chain" id="PRO_0000270770" description="Protein EFR3">
    <location>
        <begin position="1"/>
        <end position="724"/>
    </location>
</feature>
<accession>Q756C4</accession>
<dbReference type="EMBL" id="AE016818">
    <property type="protein sequence ID" value="AAS53023.2"/>
    <property type="molecule type" value="Genomic_DNA"/>
</dbReference>
<dbReference type="RefSeq" id="NP_985199.2">
    <property type="nucleotide sequence ID" value="NM_210553.2"/>
</dbReference>
<dbReference type="SMR" id="Q756C4"/>
<dbReference type="FunCoup" id="Q756C4">
    <property type="interactions" value="72"/>
</dbReference>
<dbReference type="STRING" id="284811.Q756C4"/>
<dbReference type="EnsemblFungi" id="AAS53023">
    <property type="protein sequence ID" value="AAS53023"/>
    <property type="gene ID" value="AGOS_AER343C"/>
</dbReference>
<dbReference type="GeneID" id="4621413"/>
<dbReference type="KEGG" id="ago:AGOS_AER343C"/>
<dbReference type="eggNOG" id="KOG1877">
    <property type="taxonomic scope" value="Eukaryota"/>
</dbReference>
<dbReference type="HOGENOM" id="CLU_371806_0_0_1"/>
<dbReference type="InParanoid" id="Q756C4"/>
<dbReference type="OMA" id="LYYVNSR"/>
<dbReference type="OrthoDB" id="19232at2759"/>
<dbReference type="Proteomes" id="UP000000591">
    <property type="component" value="Chromosome V"/>
</dbReference>
<dbReference type="GO" id="GO:0005886">
    <property type="term" value="C:plasma membrane"/>
    <property type="evidence" value="ECO:0000318"/>
    <property type="project" value="GO_Central"/>
</dbReference>
<dbReference type="GO" id="GO:0072659">
    <property type="term" value="P:protein localization to plasma membrane"/>
    <property type="evidence" value="ECO:0000318"/>
    <property type="project" value="GO_Central"/>
</dbReference>
<dbReference type="InterPro" id="IPR016024">
    <property type="entry name" value="ARM-type_fold"/>
</dbReference>
<dbReference type="InterPro" id="IPR039786">
    <property type="entry name" value="EFR3"/>
</dbReference>
<dbReference type="InterPro" id="IPR049150">
    <property type="entry name" value="EFR3_HEAT-like_rpt"/>
</dbReference>
<dbReference type="PANTHER" id="PTHR47766">
    <property type="entry name" value="PROTEIN EFR3"/>
    <property type="match status" value="1"/>
</dbReference>
<dbReference type="PANTHER" id="PTHR47766:SF1">
    <property type="entry name" value="PROTEIN EFR3"/>
    <property type="match status" value="1"/>
</dbReference>
<dbReference type="Pfam" id="PF21072">
    <property type="entry name" value="EFR3"/>
    <property type="match status" value="1"/>
</dbReference>
<dbReference type="SUPFAM" id="SSF48371">
    <property type="entry name" value="ARM repeat"/>
    <property type="match status" value="1"/>
</dbReference>
<proteinExistence type="inferred from homology"/>
<gene>
    <name type="primary">EFR3</name>
    <name type="ordered locus">AER343C</name>
</gene>
<comment type="similarity">
    <text evidence="1">Belongs to the EFR3 family.</text>
</comment>
<reference key="1">
    <citation type="journal article" date="2004" name="Science">
        <title>The Ashbya gossypii genome as a tool for mapping the ancient Saccharomyces cerevisiae genome.</title>
        <authorList>
            <person name="Dietrich F.S."/>
            <person name="Voegeli S."/>
            <person name="Brachat S."/>
            <person name="Lerch A."/>
            <person name="Gates K."/>
            <person name="Steiner S."/>
            <person name="Mohr C."/>
            <person name="Poehlmann R."/>
            <person name="Luedi P."/>
            <person name="Choi S."/>
            <person name="Wing R.A."/>
            <person name="Flavier A."/>
            <person name="Gaffney T.D."/>
            <person name="Philippsen P."/>
        </authorList>
    </citation>
    <scope>NUCLEOTIDE SEQUENCE [LARGE SCALE GENOMIC DNA]</scope>
    <source>
        <strain>ATCC 10895 / CBS 109.51 / FGSC 9923 / NRRL Y-1056</strain>
    </source>
</reference>
<reference key="2">
    <citation type="journal article" date="2013" name="G3 (Bethesda)">
        <title>Genomes of Ashbya fungi isolated from insects reveal four mating-type loci, numerous translocations, lack of transposons, and distinct gene duplications.</title>
        <authorList>
            <person name="Dietrich F.S."/>
            <person name="Voegeli S."/>
            <person name="Kuo S."/>
            <person name="Philippsen P."/>
        </authorList>
    </citation>
    <scope>GENOME REANNOTATION</scope>
    <scope>SEQUENCE REVISION TO 468 AND 483</scope>
    <source>
        <strain>ATCC 10895 / CBS 109.51 / FGSC 9923 / NRRL Y-1056</strain>
    </source>
</reference>